<accession>A5UAA8</accession>
<sequence length="404" mass="44855">MKLPIYLDYAATCPVDERVAKKMMAFLTIDGTFGNPASRSHKFGWQAEEAVDIARNQIADLIGADSREIVFTSGATESDNLAIKGAAHFYQTKGKHILTCKTEHKAVLDTCRQLEREGFEVTYLSPEADGLIDLEKFKAALRPDTILASIMHANNEIGVLQDIKAIGELCRANKTIFHVDATQSVGKVEINLEELAVDLMSMSSHKLYGPKGVGALYVRRKPRVRLEAIIHGGGHERGMRSGTLPVHQIVGMGEAYRIAKEEMASEMPRLKALRDRLYNGLKDIEETYVNGSMEHRLDSNLNISFNYVEGESLMMALRDIAVSSGSACTSASLEPSYVLRALGLNDELAHSSIRFTLGRYTTEEEIDYTINLMKGAVEKLRALSPLWDMFKEGIDLNTIEWSAH</sequence>
<keyword id="KW-0001">2Fe-2S</keyword>
<keyword id="KW-0963">Cytoplasm</keyword>
<keyword id="KW-0408">Iron</keyword>
<keyword id="KW-0411">Iron-sulfur</keyword>
<keyword id="KW-0479">Metal-binding</keyword>
<keyword id="KW-0663">Pyridoxal phosphate</keyword>
<keyword id="KW-0808">Transferase</keyword>
<feature type="chain" id="PRO_1000019411" description="Cysteine desulfurase IscS">
    <location>
        <begin position="1"/>
        <end position="404"/>
    </location>
</feature>
<feature type="active site" description="Cysteine persulfide intermediate" evidence="1">
    <location>
        <position position="328"/>
    </location>
</feature>
<feature type="binding site" evidence="1">
    <location>
        <begin position="75"/>
        <end position="76"/>
    </location>
    <ligand>
        <name>pyridoxal 5'-phosphate</name>
        <dbReference type="ChEBI" id="CHEBI:597326"/>
    </ligand>
</feature>
<feature type="binding site" evidence="1">
    <location>
        <position position="155"/>
    </location>
    <ligand>
        <name>pyridoxal 5'-phosphate</name>
        <dbReference type="ChEBI" id="CHEBI:597326"/>
    </ligand>
</feature>
<feature type="binding site" evidence="1">
    <location>
        <position position="183"/>
    </location>
    <ligand>
        <name>pyridoxal 5'-phosphate</name>
        <dbReference type="ChEBI" id="CHEBI:597326"/>
    </ligand>
</feature>
<feature type="binding site" evidence="1">
    <location>
        <begin position="203"/>
        <end position="205"/>
    </location>
    <ligand>
        <name>pyridoxal 5'-phosphate</name>
        <dbReference type="ChEBI" id="CHEBI:597326"/>
    </ligand>
</feature>
<feature type="binding site" evidence="1">
    <location>
        <position position="243"/>
    </location>
    <ligand>
        <name>pyridoxal 5'-phosphate</name>
        <dbReference type="ChEBI" id="CHEBI:597326"/>
    </ligand>
</feature>
<feature type="binding site" description="via persulfide group" evidence="1">
    <location>
        <position position="328"/>
    </location>
    <ligand>
        <name>[2Fe-2S] cluster</name>
        <dbReference type="ChEBI" id="CHEBI:190135"/>
        <note>ligand shared with IscU</note>
    </ligand>
</feature>
<feature type="modified residue" description="N6-(pyridoxal phosphate)lysine" evidence="1">
    <location>
        <position position="206"/>
    </location>
</feature>
<protein>
    <recommendedName>
        <fullName evidence="1">Cysteine desulfurase IscS</fullName>
        <ecNumber evidence="1">2.8.1.7</ecNumber>
    </recommendedName>
</protein>
<gene>
    <name evidence="1" type="primary">iscS</name>
    <name type="ordered locus">CGSHiEE_01115</name>
</gene>
<comment type="function">
    <text evidence="1">Master enzyme that delivers sulfur to a number of partners involved in Fe-S cluster assembly, tRNA modification or cofactor biosynthesis. Catalyzes the removal of elemental sulfur atoms from cysteine to produce alanine. Functions as a sulfur delivery protein for Fe-S cluster synthesis onto IscU, an Fe-S scaffold assembly protein, as well as other S acceptor proteins.</text>
</comment>
<comment type="catalytic activity">
    <reaction evidence="1">
        <text>(sulfur carrier)-H + L-cysteine = (sulfur carrier)-SH + L-alanine</text>
        <dbReference type="Rhea" id="RHEA:43892"/>
        <dbReference type="Rhea" id="RHEA-COMP:14737"/>
        <dbReference type="Rhea" id="RHEA-COMP:14739"/>
        <dbReference type="ChEBI" id="CHEBI:29917"/>
        <dbReference type="ChEBI" id="CHEBI:35235"/>
        <dbReference type="ChEBI" id="CHEBI:57972"/>
        <dbReference type="ChEBI" id="CHEBI:64428"/>
        <dbReference type="EC" id="2.8.1.7"/>
    </reaction>
</comment>
<comment type="cofactor">
    <cofactor evidence="1">
        <name>pyridoxal 5'-phosphate</name>
        <dbReference type="ChEBI" id="CHEBI:597326"/>
    </cofactor>
</comment>
<comment type="pathway">
    <text evidence="1">Cofactor biosynthesis; iron-sulfur cluster biosynthesis.</text>
</comment>
<comment type="subunit">
    <text evidence="1">Homodimer. Forms a heterotetramer with IscU, interacts with other sulfur acceptors.</text>
</comment>
<comment type="subcellular location">
    <subcellularLocation>
        <location evidence="1">Cytoplasm</location>
    </subcellularLocation>
</comment>
<comment type="similarity">
    <text evidence="1">Belongs to the class-V pyridoxal-phosphate-dependent aminotransferase family. NifS/IscS subfamily.</text>
</comment>
<evidence type="ECO:0000255" key="1">
    <source>
        <dbReference type="HAMAP-Rule" id="MF_00331"/>
    </source>
</evidence>
<reference key="1">
    <citation type="journal article" date="2007" name="Genome Biol.">
        <title>Characterization and modeling of the Haemophilus influenzae core and supragenomes based on the complete genomic sequences of Rd and 12 clinical nontypeable strains.</title>
        <authorList>
            <person name="Hogg J.S."/>
            <person name="Hu F.Z."/>
            <person name="Janto B."/>
            <person name="Boissy R."/>
            <person name="Hayes J."/>
            <person name="Keefe R."/>
            <person name="Post J.C."/>
            <person name="Ehrlich G.D."/>
        </authorList>
    </citation>
    <scope>NUCLEOTIDE SEQUENCE [LARGE SCALE GENOMIC DNA]</scope>
    <source>
        <strain>PittEE</strain>
    </source>
</reference>
<organism>
    <name type="scientific">Haemophilus influenzae (strain PittEE)</name>
    <dbReference type="NCBI Taxonomy" id="374930"/>
    <lineage>
        <taxon>Bacteria</taxon>
        <taxon>Pseudomonadati</taxon>
        <taxon>Pseudomonadota</taxon>
        <taxon>Gammaproteobacteria</taxon>
        <taxon>Pasteurellales</taxon>
        <taxon>Pasteurellaceae</taxon>
        <taxon>Haemophilus</taxon>
    </lineage>
</organism>
<proteinExistence type="inferred from homology"/>
<name>ISCS_HAEIE</name>
<dbReference type="EC" id="2.8.1.7" evidence="1"/>
<dbReference type="EMBL" id="CP000671">
    <property type="protein sequence ID" value="ABQ97709.1"/>
    <property type="molecule type" value="Genomic_DNA"/>
</dbReference>
<dbReference type="SMR" id="A5UAA8"/>
<dbReference type="KEGG" id="hip:CGSHiEE_01115"/>
<dbReference type="HOGENOM" id="CLU_003433_0_2_6"/>
<dbReference type="UniPathway" id="UPA00266"/>
<dbReference type="GO" id="GO:1990221">
    <property type="term" value="C:L-cysteine desulfurase complex"/>
    <property type="evidence" value="ECO:0007669"/>
    <property type="project" value="UniProtKB-ARBA"/>
</dbReference>
<dbReference type="GO" id="GO:0051537">
    <property type="term" value="F:2 iron, 2 sulfur cluster binding"/>
    <property type="evidence" value="ECO:0007669"/>
    <property type="project" value="UniProtKB-UniRule"/>
</dbReference>
<dbReference type="GO" id="GO:0031071">
    <property type="term" value="F:cysteine desulfurase activity"/>
    <property type="evidence" value="ECO:0007669"/>
    <property type="project" value="UniProtKB-UniRule"/>
</dbReference>
<dbReference type="GO" id="GO:0046872">
    <property type="term" value="F:metal ion binding"/>
    <property type="evidence" value="ECO:0007669"/>
    <property type="project" value="UniProtKB-KW"/>
</dbReference>
<dbReference type="GO" id="GO:0030170">
    <property type="term" value="F:pyridoxal phosphate binding"/>
    <property type="evidence" value="ECO:0007669"/>
    <property type="project" value="UniProtKB-UniRule"/>
</dbReference>
<dbReference type="GO" id="GO:0044571">
    <property type="term" value="P:[2Fe-2S] cluster assembly"/>
    <property type="evidence" value="ECO:0007669"/>
    <property type="project" value="UniProtKB-UniRule"/>
</dbReference>
<dbReference type="FunFam" id="3.40.640.10:FF:000003">
    <property type="entry name" value="Cysteine desulfurase IscS"/>
    <property type="match status" value="1"/>
</dbReference>
<dbReference type="FunFam" id="3.90.1150.10:FF:000002">
    <property type="entry name" value="Cysteine desulfurase IscS"/>
    <property type="match status" value="1"/>
</dbReference>
<dbReference type="Gene3D" id="3.90.1150.10">
    <property type="entry name" value="Aspartate Aminotransferase, domain 1"/>
    <property type="match status" value="1"/>
</dbReference>
<dbReference type="Gene3D" id="3.40.640.10">
    <property type="entry name" value="Type I PLP-dependent aspartate aminotransferase-like (Major domain)"/>
    <property type="match status" value="1"/>
</dbReference>
<dbReference type="HAMAP" id="MF_00331">
    <property type="entry name" value="Cys_desulf_IscS"/>
    <property type="match status" value="1"/>
</dbReference>
<dbReference type="InterPro" id="IPR000192">
    <property type="entry name" value="Aminotrans_V_dom"/>
</dbReference>
<dbReference type="InterPro" id="IPR020578">
    <property type="entry name" value="Aminotrans_V_PyrdxlP_BS"/>
</dbReference>
<dbReference type="InterPro" id="IPR010240">
    <property type="entry name" value="Cys_deSase_IscS"/>
</dbReference>
<dbReference type="InterPro" id="IPR016454">
    <property type="entry name" value="Cysteine_dSase"/>
</dbReference>
<dbReference type="InterPro" id="IPR015424">
    <property type="entry name" value="PyrdxlP-dep_Trfase"/>
</dbReference>
<dbReference type="InterPro" id="IPR015421">
    <property type="entry name" value="PyrdxlP-dep_Trfase_major"/>
</dbReference>
<dbReference type="InterPro" id="IPR015422">
    <property type="entry name" value="PyrdxlP-dep_Trfase_small"/>
</dbReference>
<dbReference type="NCBIfam" id="TIGR02006">
    <property type="entry name" value="IscS"/>
    <property type="match status" value="1"/>
</dbReference>
<dbReference type="NCBIfam" id="NF002806">
    <property type="entry name" value="PRK02948.1"/>
    <property type="match status" value="1"/>
</dbReference>
<dbReference type="NCBIfam" id="NF010611">
    <property type="entry name" value="PRK14012.1"/>
    <property type="match status" value="1"/>
</dbReference>
<dbReference type="PANTHER" id="PTHR11601:SF34">
    <property type="entry name" value="CYSTEINE DESULFURASE"/>
    <property type="match status" value="1"/>
</dbReference>
<dbReference type="PANTHER" id="PTHR11601">
    <property type="entry name" value="CYSTEINE DESULFURYLASE FAMILY MEMBER"/>
    <property type="match status" value="1"/>
</dbReference>
<dbReference type="Pfam" id="PF00266">
    <property type="entry name" value="Aminotran_5"/>
    <property type="match status" value="1"/>
</dbReference>
<dbReference type="PIRSF" id="PIRSF005572">
    <property type="entry name" value="NifS"/>
    <property type="match status" value="1"/>
</dbReference>
<dbReference type="SUPFAM" id="SSF53383">
    <property type="entry name" value="PLP-dependent transferases"/>
    <property type="match status" value="1"/>
</dbReference>
<dbReference type="PROSITE" id="PS00595">
    <property type="entry name" value="AA_TRANSFER_CLASS_5"/>
    <property type="match status" value="1"/>
</dbReference>